<accession>Q1GB78</accession>
<name>RF3_LACDA</name>
<comment type="function">
    <text evidence="1">Increases the formation of ribosomal termination complexes and stimulates activities of RF-1 and RF-2. It binds guanine nucleotides and has strong preference for UGA stop codons. It may interact directly with the ribosome. The stimulation of RF-1 and RF-2 is significantly reduced by GTP and GDP, but not by GMP.</text>
</comment>
<comment type="subcellular location">
    <subcellularLocation>
        <location evidence="1">Cytoplasm</location>
    </subcellularLocation>
</comment>
<comment type="similarity">
    <text evidence="1">Belongs to the TRAFAC class translation factor GTPase superfamily. Classic translation factor GTPase family. PrfC subfamily.</text>
</comment>
<keyword id="KW-0963">Cytoplasm</keyword>
<keyword id="KW-0342">GTP-binding</keyword>
<keyword id="KW-0547">Nucleotide-binding</keyword>
<keyword id="KW-0648">Protein biosynthesis</keyword>
<keyword id="KW-1185">Reference proteome</keyword>
<dbReference type="EMBL" id="CR954253">
    <property type="protein sequence ID" value="CAI97396.1"/>
    <property type="molecule type" value="Genomic_DNA"/>
</dbReference>
<dbReference type="RefSeq" id="WP_003618851.1">
    <property type="nucleotide sequence ID" value="NZ_JQAV01000001.1"/>
</dbReference>
<dbReference type="SMR" id="Q1GB78"/>
<dbReference type="STRING" id="390333.Ldb0566"/>
<dbReference type="KEGG" id="ldb:Ldb0566"/>
<dbReference type="PATRIC" id="fig|390333.13.peg.232"/>
<dbReference type="eggNOG" id="COG4108">
    <property type="taxonomic scope" value="Bacteria"/>
</dbReference>
<dbReference type="HOGENOM" id="CLU_002794_2_1_9"/>
<dbReference type="BioCyc" id="LDEL390333:LDB_RS02440-MONOMER"/>
<dbReference type="Proteomes" id="UP000001259">
    <property type="component" value="Chromosome"/>
</dbReference>
<dbReference type="GO" id="GO:0005829">
    <property type="term" value="C:cytosol"/>
    <property type="evidence" value="ECO:0007669"/>
    <property type="project" value="TreeGrafter"/>
</dbReference>
<dbReference type="GO" id="GO:0005525">
    <property type="term" value="F:GTP binding"/>
    <property type="evidence" value="ECO:0007669"/>
    <property type="project" value="UniProtKB-UniRule"/>
</dbReference>
<dbReference type="GO" id="GO:0003924">
    <property type="term" value="F:GTPase activity"/>
    <property type="evidence" value="ECO:0007669"/>
    <property type="project" value="InterPro"/>
</dbReference>
<dbReference type="GO" id="GO:0016150">
    <property type="term" value="F:translation release factor activity, codon nonspecific"/>
    <property type="evidence" value="ECO:0007669"/>
    <property type="project" value="TreeGrafter"/>
</dbReference>
<dbReference type="GO" id="GO:0016149">
    <property type="term" value="F:translation release factor activity, codon specific"/>
    <property type="evidence" value="ECO:0007669"/>
    <property type="project" value="UniProtKB-UniRule"/>
</dbReference>
<dbReference type="GO" id="GO:0006449">
    <property type="term" value="P:regulation of translational termination"/>
    <property type="evidence" value="ECO:0007669"/>
    <property type="project" value="UniProtKB-UniRule"/>
</dbReference>
<dbReference type="CDD" id="cd04169">
    <property type="entry name" value="RF3"/>
    <property type="match status" value="1"/>
</dbReference>
<dbReference type="CDD" id="cd16259">
    <property type="entry name" value="RF3_III"/>
    <property type="match status" value="1"/>
</dbReference>
<dbReference type="FunFam" id="3.30.70.3280:FF:000001">
    <property type="entry name" value="Peptide chain release factor 3"/>
    <property type="match status" value="1"/>
</dbReference>
<dbReference type="FunFam" id="3.40.50.300:FF:000542">
    <property type="entry name" value="Peptide chain release factor 3"/>
    <property type="match status" value="1"/>
</dbReference>
<dbReference type="Gene3D" id="3.40.50.300">
    <property type="entry name" value="P-loop containing nucleotide triphosphate hydrolases"/>
    <property type="match status" value="1"/>
</dbReference>
<dbReference type="Gene3D" id="3.30.70.3280">
    <property type="entry name" value="Peptide chain release factor 3, domain III"/>
    <property type="match status" value="1"/>
</dbReference>
<dbReference type="Gene3D" id="2.40.30.10">
    <property type="entry name" value="Translation factors"/>
    <property type="match status" value="1"/>
</dbReference>
<dbReference type="HAMAP" id="MF_00072">
    <property type="entry name" value="Rel_fac_3"/>
    <property type="match status" value="1"/>
</dbReference>
<dbReference type="InterPro" id="IPR053905">
    <property type="entry name" value="EF-G-like_DII"/>
</dbReference>
<dbReference type="InterPro" id="IPR035647">
    <property type="entry name" value="EFG_III/V"/>
</dbReference>
<dbReference type="InterPro" id="IPR031157">
    <property type="entry name" value="G_TR_CS"/>
</dbReference>
<dbReference type="InterPro" id="IPR027417">
    <property type="entry name" value="P-loop_NTPase"/>
</dbReference>
<dbReference type="InterPro" id="IPR004548">
    <property type="entry name" value="PrfC"/>
</dbReference>
<dbReference type="InterPro" id="IPR032090">
    <property type="entry name" value="RF3_C"/>
</dbReference>
<dbReference type="InterPro" id="IPR038467">
    <property type="entry name" value="RF3_dom_3_sf"/>
</dbReference>
<dbReference type="InterPro" id="IPR041732">
    <property type="entry name" value="RF3_GTP-bd"/>
</dbReference>
<dbReference type="InterPro" id="IPR005225">
    <property type="entry name" value="Small_GTP-bd"/>
</dbReference>
<dbReference type="InterPro" id="IPR000795">
    <property type="entry name" value="T_Tr_GTP-bd_dom"/>
</dbReference>
<dbReference type="InterPro" id="IPR009000">
    <property type="entry name" value="Transl_B-barrel_sf"/>
</dbReference>
<dbReference type="NCBIfam" id="TIGR00503">
    <property type="entry name" value="prfC"/>
    <property type="match status" value="1"/>
</dbReference>
<dbReference type="NCBIfam" id="NF001964">
    <property type="entry name" value="PRK00741.1"/>
    <property type="match status" value="1"/>
</dbReference>
<dbReference type="NCBIfam" id="TIGR00231">
    <property type="entry name" value="small_GTP"/>
    <property type="match status" value="1"/>
</dbReference>
<dbReference type="PANTHER" id="PTHR43556">
    <property type="entry name" value="PEPTIDE CHAIN RELEASE FACTOR RF3"/>
    <property type="match status" value="1"/>
</dbReference>
<dbReference type="PANTHER" id="PTHR43556:SF2">
    <property type="entry name" value="PEPTIDE CHAIN RELEASE FACTOR RF3"/>
    <property type="match status" value="1"/>
</dbReference>
<dbReference type="Pfam" id="PF22042">
    <property type="entry name" value="EF-G_D2"/>
    <property type="match status" value="1"/>
</dbReference>
<dbReference type="Pfam" id="PF00009">
    <property type="entry name" value="GTP_EFTU"/>
    <property type="match status" value="1"/>
</dbReference>
<dbReference type="Pfam" id="PF16658">
    <property type="entry name" value="RF3_C"/>
    <property type="match status" value="1"/>
</dbReference>
<dbReference type="PRINTS" id="PR00315">
    <property type="entry name" value="ELONGATNFCT"/>
</dbReference>
<dbReference type="SUPFAM" id="SSF54980">
    <property type="entry name" value="EF-G C-terminal domain-like"/>
    <property type="match status" value="1"/>
</dbReference>
<dbReference type="SUPFAM" id="SSF52540">
    <property type="entry name" value="P-loop containing nucleoside triphosphate hydrolases"/>
    <property type="match status" value="1"/>
</dbReference>
<dbReference type="SUPFAM" id="SSF50447">
    <property type="entry name" value="Translation proteins"/>
    <property type="match status" value="1"/>
</dbReference>
<dbReference type="PROSITE" id="PS00301">
    <property type="entry name" value="G_TR_1"/>
    <property type="match status" value="1"/>
</dbReference>
<dbReference type="PROSITE" id="PS51722">
    <property type="entry name" value="G_TR_2"/>
    <property type="match status" value="1"/>
</dbReference>
<reference key="1">
    <citation type="journal article" date="2006" name="Proc. Natl. Acad. Sci. U.S.A.">
        <title>The complete genome sequence of Lactobacillus bulgaricus reveals extensive and ongoing reductive evolution.</title>
        <authorList>
            <person name="van de Guchte M."/>
            <person name="Penaud S."/>
            <person name="Grimaldi C."/>
            <person name="Barbe V."/>
            <person name="Bryson K."/>
            <person name="Nicolas P."/>
            <person name="Robert C."/>
            <person name="Oztas S."/>
            <person name="Mangenot S."/>
            <person name="Couloux A."/>
            <person name="Loux V."/>
            <person name="Dervyn R."/>
            <person name="Bossy R."/>
            <person name="Bolotin A."/>
            <person name="Batto J.-M."/>
            <person name="Walunas T."/>
            <person name="Gibrat J.-F."/>
            <person name="Bessieres P."/>
            <person name="Weissenbach J."/>
            <person name="Ehrlich S.D."/>
            <person name="Maguin E."/>
        </authorList>
    </citation>
    <scope>NUCLEOTIDE SEQUENCE [LARGE SCALE GENOMIC DNA]</scope>
    <source>
        <strain>ATCC 11842 / DSM 20081 / BCRC 10696 / JCM 1002 / NBRC 13953 / NCIMB 11778 / NCTC 12712 / WDCM 00102 / Lb 14</strain>
    </source>
</reference>
<gene>
    <name evidence="1" type="primary">prfC</name>
    <name type="ordered locus">Ldb0566</name>
</gene>
<protein>
    <recommendedName>
        <fullName evidence="1">Peptide chain release factor 3</fullName>
        <shortName evidence="1">RF-3</shortName>
    </recommendedName>
</protein>
<organism>
    <name type="scientific">Lactobacillus delbrueckii subsp. bulgaricus (strain ATCC 11842 / DSM 20081 / BCRC 10696 / JCM 1002 / NBRC 13953 / NCIMB 11778 / NCTC 12712 / WDCM 00102 / Lb 14)</name>
    <dbReference type="NCBI Taxonomy" id="390333"/>
    <lineage>
        <taxon>Bacteria</taxon>
        <taxon>Bacillati</taxon>
        <taxon>Bacillota</taxon>
        <taxon>Bacilli</taxon>
        <taxon>Lactobacillales</taxon>
        <taxon>Lactobacillaceae</taxon>
        <taxon>Lactobacillus</taxon>
    </lineage>
</organism>
<evidence type="ECO:0000255" key="1">
    <source>
        <dbReference type="HAMAP-Rule" id="MF_00072"/>
    </source>
</evidence>
<proteinExistence type="inferred from homology"/>
<feature type="chain" id="PRO_1000057485" description="Peptide chain release factor 3">
    <location>
        <begin position="1"/>
        <end position="523"/>
    </location>
</feature>
<feature type="domain" description="tr-type G">
    <location>
        <begin position="10"/>
        <end position="277"/>
    </location>
</feature>
<feature type="binding site" evidence="1">
    <location>
        <begin position="19"/>
        <end position="26"/>
    </location>
    <ligand>
        <name>GTP</name>
        <dbReference type="ChEBI" id="CHEBI:37565"/>
    </ligand>
</feature>
<feature type="binding site" evidence="1">
    <location>
        <begin position="87"/>
        <end position="91"/>
    </location>
    <ligand>
        <name>GTP</name>
        <dbReference type="ChEBI" id="CHEBI:37565"/>
    </ligand>
</feature>
<feature type="binding site" evidence="1">
    <location>
        <begin position="141"/>
        <end position="144"/>
    </location>
    <ligand>
        <name>GTP</name>
        <dbReference type="ChEBI" id="CHEBI:37565"/>
    </ligand>
</feature>
<sequence length="523" mass="58794">MNKELLDKVNKRRTFAIISHPDAGKTTITEQMLLLGGVIRSAGTVKARKTGNYATSDWMEIEKKRGISVTSSVMQFEYQGKRINILDTPGHQDFSEDTYRTLMAVDAAVMVIDSARGIEPQTKKLFKVVRQRGIPVFTFMNKLDRDGREPLDLVAELEEVLGIEGVAMNWPIGMGQSLLGLYDLANQRVELYHPEEGQDRFIALADGKAPAGSPLADDPQFEETLGEIELLEGAGASFDRAKVLAGQQTPVFFGSALTNFGVETFLEQFVDLAPAPGEHEVNGDEELKPDDDEFSGFIFKIQANMNPQHRDRIAFVRVCSGEFSKGLDVTLARTGKQVRLNNAVEFESSARVQVSEAVAGDIVGLYDTGNFQIGDSVYAGKRKLEFPPLPEFTPELFMRVSPKNVMKQKSFHKGMNQLVQEGAVQLYRNYQTDDYILGAVGQLQFEVFQYRMKNEYNSEVEMTSIGHRVARWINPDQLDPKMSSSRNLLVKDRFGNPLFLFENAFAERWFHDKYPDVELTEKL</sequence>